<comment type="subcellular location">
    <subcellularLocation>
        <location evidence="3">Secreted</location>
    </subcellularLocation>
</comment>
<comment type="tissue specificity">
    <text evidence="7">Expressed by the venom duct.</text>
</comment>
<comment type="domain">
    <text evidence="6">The cysteine framework is XI (C-C-CC-CC-C-C).</text>
</comment>
<comment type="mass spectrometry"/>
<comment type="similarity">
    <text evidence="6">Belongs to the conotoxin I3 superfamily.</text>
</comment>
<evidence type="ECO:0000250" key="1">
    <source>
        <dbReference type="UniProtKB" id="Q7Z094"/>
    </source>
</evidence>
<evidence type="ECO:0000255" key="2"/>
<evidence type="ECO:0000269" key="3">
    <source>
    </source>
</evidence>
<evidence type="ECO:0000303" key="4">
    <source>
    </source>
</evidence>
<evidence type="ECO:0000303" key="5">
    <source>
    </source>
</evidence>
<evidence type="ECO:0000305" key="6"/>
<evidence type="ECO:0000305" key="7">
    <source>
    </source>
</evidence>
<evidence type="ECO:0000312" key="8">
    <source>
        <dbReference type="EMBL" id="ACU30041.1"/>
    </source>
</evidence>
<accession>D2DGD4</accession>
<proteinExistence type="evidence at protein level"/>
<sequence>MKLVLAIVVILMLLSLSTGAEMSDNHASMSANALRDRLLGPKALLCGGTHARCNRDNDCCGSLCCFGTCISAFVPC</sequence>
<organism>
    <name type="scientific">Conus caracteristicus</name>
    <name type="common">Characteristic cone</name>
    <dbReference type="NCBI Taxonomy" id="89440"/>
    <lineage>
        <taxon>Eukaryota</taxon>
        <taxon>Metazoa</taxon>
        <taxon>Spiralia</taxon>
        <taxon>Lophotrochozoa</taxon>
        <taxon>Mollusca</taxon>
        <taxon>Gastropoda</taxon>
        <taxon>Caenogastropoda</taxon>
        <taxon>Neogastropoda</taxon>
        <taxon>Conoidea</taxon>
        <taxon>Conidae</taxon>
        <taxon>Conus</taxon>
    </lineage>
</organism>
<dbReference type="EMBL" id="FJ531695">
    <property type="protein sequence ID" value="ACU30041.1"/>
    <property type="molecule type" value="mRNA"/>
</dbReference>
<dbReference type="SMR" id="D2DGD4"/>
<dbReference type="GO" id="GO:0005576">
    <property type="term" value="C:extracellular region"/>
    <property type="evidence" value="ECO:0007669"/>
    <property type="project" value="UniProtKB-SubCell"/>
</dbReference>
<dbReference type="GO" id="GO:0090729">
    <property type="term" value="F:toxin activity"/>
    <property type="evidence" value="ECO:0007669"/>
    <property type="project" value="UniProtKB-KW"/>
</dbReference>
<dbReference type="PROSITE" id="PS60019">
    <property type="entry name" value="I_CONOTOXIN"/>
    <property type="match status" value="1"/>
</dbReference>
<keyword id="KW-0903">Direct protein sequencing</keyword>
<keyword id="KW-1015">Disulfide bond</keyword>
<keyword id="KW-0964">Secreted</keyword>
<keyword id="KW-0732">Signal</keyword>
<keyword id="KW-0800">Toxin</keyword>
<reference key="1">
    <citation type="journal article" date="2009" name="Peptides">
        <title>New conotoxins define the novel I3-superfamily.</title>
        <authorList>
            <person name="Yuan D.D."/>
            <person name="Liu L."/>
            <person name="Shao X.X."/>
            <person name="Peng C."/>
            <person name="Chi C.W."/>
            <person name="Guo Z.Y."/>
        </authorList>
    </citation>
    <scope>NUCLEOTIDE SEQUENCE [MRNA]</scope>
    <scope>PROTEIN SEQUENCE OF 43-76</scope>
    <scope>SUBCELLULAR LOCATION</scope>
    <scope>MASS SPECTROMETRY</scope>
</reference>
<reference key="2">
    <citation type="journal article" date="2019" name="Mar. Drugs">
        <title>High-throughput identification and analysis of novel conotoxins from three vermivorous cone snails by transcriptome sequencing.</title>
        <authorList>
            <person name="Yao G."/>
            <person name="Peng C."/>
            <person name="Zhu Y."/>
            <person name="Fan C."/>
            <person name="Jiang H."/>
            <person name="Chen J."/>
            <person name="Cao Y."/>
            <person name="Shi Q."/>
        </authorList>
    </citation>
    <scope>NUCLEOTIDE SEQUENCE [MRNA]</scope>
    <source>
        <tissue>Venom duct</tissue>
    </source>
</reference>
<protein>
    <recommendedName>
        <fullName evidence="4">Conotoxin Ca11b</fullName>
    </recommendedName>
    <alternativeName>
        <fullName evidence="5">Ca-24</fullName>
    </alternativeName>
    <alternativeName>
        <fullName evidence="8">Ca11.2</fullName>
    </alternativeName>
</protein>
<feature type="signal peptide" evidence="2">
    <location>
        <begin position="1"/>
        <end position="19"/>
    </location>
</feature>
<feature type="propeptide" id="PRO_0000392152" evidence="3">
    <location>
        <begin position="20"/>
        <end position="42"/>
    </location>
</feature>
<feature type="peptide" id="PRO_0000392153" description="Conotoxin Ca11b">
    <location>
        <begin position="43"/>
        <end position="76"/>
    </location>
</feature>
<feature type="disulfide bond" evidence="1">
    <location>
        <begin position="46"/>
        <end position="60"/>
    </location>
</feature>
<feature type="disulfide bond" evidence="1">
    <location>
        <begin position="53"/>
        <end position="65"/>
    </location>
</feature>
<feature type="disulfide bond" evidence="1">
    <location>
        <begin position="59"/>
        <end position="69"/>
    </location>
</feature>
<feature type="disulfide bond" evidence="1">
    <location>
        <begin position="64"/>
        <end position="76"/>
    </location>
</feature>
<name>I3BB_CONCB</name>